<comment type="function">
    <text evidence="1">Catalyzes the 2'-O-methylation of the ribose of cytidine 1402 (C1402) in 16S rRNA.</text>
</comment>
<comment type="catalytic activity">
    <reaction evidence="1">
        <text>cytidine(1402) in 16S rRNA + S-adenosyl-L-methionine = 2'-O-methylcytidine(1402) in 16S rRNA + S-adenosyl-L-homocysteine + H(+)</text>
        <dbReference type="Rhea" id="RHEA:42924"/>
        <dbReference type="Rhea" id="RHEA-COMP:10285"/>
        <dbReference type="Rhea" id="RHEA-COMP:10286"/>
        <dbReference type="ChEBI" id="CHEBI:15378"/>
        <dbReference type="ChEBI" id="CHEBI:57856"/>
        <dbReference type="ChEBI" id="CHEBI:59789"/>
        <dbReference type="ChEBI" id="CHEBI:74495"/>
        <dbReference type="ChEBI" id="CHEBI:82748"/>
        <dbReference type="EC" id="2.1.1.198"/>
    </reaction>
</comment>
<comment type="subcellular location">
    <subcellularLocation>
        <location evidence="1">Cytoplasm</location>
    </subcellularLocation>
</comment>
<comment type="similarity">
    <text evidence="1">Belongs to the methyltransferase superfamily. RsmI family.</text>
</comment>
<evidence type="ECO:0000255" key="1">
    <source>
        <dbReference type="HAMAP-Rule" id="MF_01877"/>
    </source>
</evidence>
<sequence>MTDNKTVPNGAPILYIVPTPIGNLGDITQRALDVLASVDMIAVEDTRHTGKLLAHFNISTKTFALHDHNEQQKAQVLVDKLLSGLSIALVSDAGTPLISDPGYHLVTQCRQAGVKVVPLPGPCAVITALSASGLPSDSFSFEGFLPAKSKARKDKLLEIAKVSRTCIFYESPHRICESLQDMLDVLGGEREVVLARELTKTFETIQGMPLAELITWIAEDDNRKKGEMVLLVHGYRDAGEQQLPDEALRTLTILTKELPLKKAAALVAEIHQLKKNALYKWGLENLGE</sequence>
<organism>
    <name type="scientific">Vibrio cholerae serotype O1 (strain ATCC 39315 / El Tor Inaba N16961)</name>
    <dbReference type="NCBI Taxonomy" id="243277"/>
    <lineage>
        <taxon>Bacteria</taxon>
        <taxon>Pseudomonadati</taxon>
        <taxon>Pseudomonadota</taxon>
        <taxon>Gammaproteobacteria</taxon>
        <taxon>Vibrionales</taxon>
        <taxon>Vibrionaceae</taxon>
        <taxon>Vibrio</taxon>
    </lineage>
</organism>
<reference key="1">
    <citation type="journal article" date="2000" name="Nature">
        <title>DNA sequence of both chromosomes of the cholera pathogen Vibrio cholerae.</title>
        <authorList>
            <person name="Heidelberg J.F."/>
            <person name="Eisen J.A."/>
            <person name="Nelson W.C."/>
            <person name="Clayton R.A."/>
            <person name="Gwinn M.L."/>
            <person name="Dodson R.J."/>
            <person name="Haft D.H."/>
            <person name="Hickey E.K."/>
            <person name="Peterson J.D."/>
            <person name="Umayam L.A."/>
            <person name="Gill S.R."/>
            <person name="Nelson K.E."/>
            <person name="Read T.D."/>
            <person name="Tettelin H."/>
            <person name="Richardson D.L."/>
            <person name="Ermolaeva M.D."/>
            <person name="Vamathevan J.J."/>
            <person name="Bass S."/>
            <person name="Qin H."/>
            <person name="Dragoi I."/>
            <person name="Sellers P."/>
            <person name="McDonald L.A."/>
            <person name="Utterback T.R."/>
            <person name="Fleischmann R.D."/>
            <person name="Nierman W.C."/>
            <person name="White O."/>
            <person name="Salzberg S.L."/>
            <person name="Smith H.O."/>
            <person name="Colwell R.R."/>
            <person name="Mekalanos J.J."/>
            <person name="Venter J.C."/>
            <person name="Fraser C.M."/>
        </authorList>
    </citation>
    <scope>NUCLEOTIDE SEQUENCE [LARGE SCALE GENOMIC DNA]</scope>
    <source>
        <strain>ATCC 39315 / El Tor Inaba N16961</strain>
    </source>
</reference>
<accession>Q9KUD9</accession>
<name>RSMI_VIBCH</name>
<keyword id="KW-0963">Cytoplasm</keyword>
<keyword id="KW-0489">Methyltransferase</keyword>
<keyword id="KW-1185">Reference proteome</keyword>
<keyword id="KW-0698">rRNA processing</keyword>
<keyword id="KW-0949">S-adenosyl-L-methionine</keyword>
<keyword id="KW-0808">Transferase</keyword>
<proteinExistence type="inferred from homology"/>
<gene>
    <name evidence="1" type="primary">rsmI</name>
    <name type="ordered locus">VC_0582</name>
</gene>
<feature type="chain" id="PRO_0000211961" description="Ribosomal RNA small subunit methyltransferase I">
    <location>
        <begin position="1"/>
        <end position="288"/>
    </location>
</feature>
<protein>
    <recommendedName>
        <fullName evidence="1">Ribosomal RNA small subunit methyltransferase I</fullName>
        <ecNumber evidence="1">2.1.1.198</ecNumber>
    </recommendedName>
    <alternativeName>
        <fullName evidence="1">16S rRNA 2'-O-ribose C1402 methyltransferase</fullName>
    </alternativeName>
    <alternativeName>
        <fullName evidence="1">rRNA (cytidine-2'-O-)-methyltransferase RsmI</fullName>
    </alternativeName>
</protein>
<dbReference type="EC" id="2.1.1.198" evidence="1"/>
<dbReference type="EMBL" id="AE003852">
    <property type="protein sequence ID" value="AAF93750.1"/>
    <property type="molecule type" value="Genomic_DNA"/>
</dbReference>
<dbReference type="PIR" id="C82306">
    <property type="entry name" value="C82306"/>
</dbReference>
<dbReference type="RefSeq" id="NP_230233.1">
    <property type="nucleotide sequence ID" value="NC_002505.1"/>
</dbReference>
<dbReference type="RefSeq" id="WP_000131542.1">
    <property type="nucleotide sequence ID" value="NZ_LT906614.1"/>
</dbReference>
<dbReference type="SMR" id="Q9KUD9"/>
<dbReference type="STRING" id="243277.VC_0582"/>
<dbReference type="DNASU" id="2615370"/>
<dbReference type="EnsemblBacteria" id="AAF93750">
    <property type="protein sequence ID" value="AAF93750"/>
    <property type="gene ID" value="VC_0582"/>
</dbReference>
<dbReference type="KEGG" id="vch:VC_0582"/>
<dbReference type="PATRIC" id="fig|243277.26.peg.555"/>
<dbReference type="eggNOG" id="COG0313">
    <property type="taxonomic scope" value="Bacteria"/>
</dbReference>
<dbReference type="HOGENOM" id="CLU_044779_2_0_6"/>
<dbReference type="Proteomes" id="UP000000584">
    <property type="component" value="Chromosome 1"/>
</dbReference>
<dbReference type="GO" id="GO:0005737">
    <property type="term" value="C:cytoplasm"/>
    <property type="evidence" value="ECO:0007669"/>
    <property type="project" value="UniProtKB-SubCell"/>
</dbReference>
<dbReference type="GO" id="GO:0070677">
    <property type="term" value="F:rRNA (cytosine-2'-O-)-methyltransferase activity"/>
    <property type="evidence" value="ECO:0007669"/>
    <property type="project" value="UniProtKB-UniRule"/>
</dbReference>
<dbReference type="CDD" id="cd11648">
    <property type="entry name" value="RsmI"/>
    <property type="match status" value="1"/>
</dbReference>
<dbReference type="FunFam" id="3.30.950.10:FF:000002">
    <property type="entry name" value="Ribosomal RNA small subunit methyltransferase I"/>
    <property type="match status" value="1"/>
</dbReference>
<dbReference type="FunFam" id="3.40.1010.10:FF:000002">
    <property type="entry name" value="Ribosomal RNA small subunit methyltransferase I"/>
    <property type="match status" value="1"/>
</dbReference>
<dbReference type="Gene3D" id="3.40.1010.10">
    <property type="entry name" value="Cobalt-precorrin-4 Transmethylase, Domain 1"/>
    <property type="match status" value="1"/>
</dbReference>
<dbReference type="Gene3D" id="3.30.950.10">
    <property type="entry name" value="Methyltransferase, Cobalt-precorrin-4 Transmethylase, Domain 2"/>
    <property type="match status" value="1"/>
</dbReference>
<dbReference type="HAMAP" id="MF_01877">
    <property type="entry name" value="16SrRNA_methyltr_I"/>
    <property type="match status" value="1"/>
</dbReference>
<dbReference type="InterPro" id="IPR000878">
    <property type="entry name" value="4pyrrol_Mease"/>
</dbReference>
<dbReference type="InterPro" id="IPR035996">
    <property type="entry name" value="4pyrrol_Methylase_sf"/>
</dbReference>
<dbReference type="InterPro" id="IPR014777">
    <property type="entry name" value="4pyrrole_Mease_sub1"/>
</dbReference>
<dbReference type="InterPro" id="IPR014776">
    <property type="entry name" value="4pyrrole_Mease_sub2"/>
</dbReference>
<dbReference type="InterPro" id="IPR008189">
    <property type="entry name" value="rRNA_ssu_MeTfrase_I"/>
</dbReference>
<dbReference type="InterPro" id="IPR053910">
    <property type="entry name" value="RsmI_HTH"/>
</dbReference>
<dbReference type="InterPro" id="IPR018063">
    <property type="entry name" value="SAM_MeTrfase_RsmI_CS"/>
</dbReference>
<dbReference type="NCBIfam" id="TIGR00096">
    <property type="entry name" value="16S rRNA (cytidine(1402)-2'-O)-methyltransferase"/>
    <property type="match status" value="1"/>
</dbReference>
<dbReference type="PANTHER" id="PTHR46111">
    <property type="entry name" value="RIBOSOMAL RNA SMALL SUBUNIT METHYLTRANSFERASE I"/>
    <property type="match status" value="1"/>
</dbReference>
<dbReference type="PANTHER" id="PTHR46111:SF1">
    <property type="entry name" value="RIBOSOMAL RNA SMALL SUBUNIT METHYLTRANSFERASE I"/>
    <property type="match status" value="1"/>
</dbReference>
<dbReference type="Pfam" id="PF23016">
    <property type="entry name" value="RsmI_C"/>
    <property type="match status" value="1"/>
</dbReference>
<dbReference type="Pfam" id="PF00590">
    <property type="entry name" value="TP_methylase"/>
    <property type="match status" value="1"/>
</dbReference>
<dbReference type="PIRSF" id="PIRSF005917">
    <property type="entry name" value="MTase_YraL"/>
    <property type="match status" value="1"/>
</dbReference>
<dbReference type="SUPFAM" id="SSF53790">
    <property type="entry name" value="Tetrapyrrole methylase"/>
    <property type="match status" value="1"/>
</dbReference>
<dbReference type="PROSITE" id="PS01296">
    <property type="entry name" value="RSMI"/>
    <property type="match status" value="1"/>
</dbReference>